<comment type="subcellular location">
    <subcellularLocation>
        <location>Secreted</location>
    </subcellularLocation>
</comment>
<comment type="allergen">
    <text>Causes an allergic reaction in human. Causes grass pollen allergy. Binds to IgE.</text>
</comment>
<comment type="similarity">
    <text evidence="4">Belongs to the expansin family. Expansin B subfamily.</text>
</comment>
<protein>
    <recommendedName>
        <fullName>Major pollen allergen Hol l 1</fullName>
    </recommendedName>
    <alternativeName>
        <fullName>Allergen Hol l 1.0101/1.0102</fullName>
    </alternativeName>
    <alternativeName>
        <fullName>Allergen Hol l I</fullName>
    </alternativeName>
    <allergenName>Hol l 1</allergenName>
</protein>
<dbReference type="EMBL" id="Z27084">
    <property type="protein sequence ID" value="CAA81610.1"/>
    <property type="molecule type" value="mRNA"/>
</dbReference>
<dbReference type="EMBL" id="Z68893">
    <property type="protein sequence ID" value="CAA93121.1"/>
    <property type="molecule type" value="mRNA"/>
</dbReference>
<dbReference type="PIR" id="S38581">
    <property type="entry name" value="S38581"/>
</dbReference>
<dbReference type="SMR" id="P43216"/>
<dbReference type="Allergome" id="405">
    <property type="allergen name" value="Hol l 1"/>
</dbReference>
<dbReference type="Allergome" id="406">
    <property type="allergen name" value="Hol l 1.0101"/>
</dbReference>
<dbReference type="Allergome" id="407">
    <property type="allergen name" value="Hol l 1.0102"/>
</dbReference>
<dbReference type="GO" id="GO:0005576">
    <property type="term" value="C:extracellular region"/>
    <property type="evidence" value="ECO:0007669"/>
    <property type="project" value="UniProtKB-SubCell"/>
</dbReference>
<dbReference type="GO" id="GO:0009828">
    <property type="term" value="P:plant-type cell wall loosening"/>
    <property type="evidence" value="ECO:0000250"/>
    <property type="project" value="UniProtKB"/>
</dbReference>
<dbReference type="GO" id="GO:0019953">
    <property type="term" value="P:sexual reproduction"/>
    <property type="evidence" value="ECO:0007669"/>
    <property type="project" value="InterPro"/>
</dbReference>
<dbReference type="CDD" id="cd22275">
    <property type="entry name" value="DPBB_EXPB_N"/>
    <property type="match status" value="1"/>
</dbReference>
<dbReference type="Gene3D" id="2.60.40.760">
    <property type="entry name" value="Expansin, cellulose-binding-like domain"/>
    <property type="match status" value="1"/>
</dbReference>
<dbReference type="Gene3D" id="2.40.40.10">
    <property type="entry name" value="RlpA-like domain"/>
    <property type="match status" value="1"/>
</dbReference>
<dbReference type="InterPro" id="IPR007118">
    <property type="entry name" value="Expan_Lol_pI"/>
</dbReference>
<dbReference type="InterPro" id="IPR007112">
    <property type="entry name" value="Expansin/allergen_DPBB_dom"/>
</dbReference>
<dbReference type="InterPro" id="IPR007117">
    <property type="entry name" value="Expansin_CBD"/>
</dbReference>
<dbReference type="InterPro" id="IPR036749">
    <property type="entry name" value="Expansin_CBD_sf"/>
</dbReference>
<dbReference type="InterPro" id="IPR005795">
    <property type="entry name" value="LolPI"/>
</dbReference>
<dbReference type="InterPro" id="IPR009009">
    <property type="entry name" value="RlpA-like_DPBB"/>
</dbReference>
<dbReference type="InterPro" id="IPR036908">
    <property type="entry name" value="RlpA-like_sf"/>
</dbReference>
<dbReference type="PANTHER" id="PTHR31692:SF21">
    <property type="entry name" value="EXPANSIN-B1"/>
    <property type="match status" value="1"/>
</dbReference>
<dbReference type="PANTHER" id="PTHR31692">
    <property type="entry name" value="EXPANSIN-B3"/>
    <property type="match status" value="1"/>
</dbReference>
<dbReference type="Pfam" id="PF03330">
    <property type="entry name" value="DPBB_1"/>
    <property type="match status" value="1"/>
</dbReference>
<dbReference type="Pfam" id="PF01357">
    <property type="entry name" value="Expansin_C"/>
    <property type="match status" value="1"/>
</dbReference>
<dbReference type="PRINTS" id="PR01225">
    <property type="entry name" value="EXPANSNFAMLY"/>
</dbReference>
<dbReference type="PRINTS" id="PR00829">
    <property type="entry name" value="LOLP1ALLERGN"/>
</dbReference>
<dbReference type="SMART" id="SM00837">
    <property type="entry name" value="DPBB_1"/>
    <property type="match status" value="1"/>
</dbReference>
<dbReference type="SUPFAM" id="SSF50685">
    <property type="entry name" value="Barwin-like endoglucanases"/>
    <property type="match status" value="1"/>
</dbReference>
<dbReference type="SUPFAM" id="SSF49590">
    <property type="entry name" value="PHL pollen allergen"/>
    <property type="match status" value="1"/>
</dbReference>
<dbReference type="PROSITE" id="PS50843">
    <property type="entry name" value="EXPANSIN_CBD"/>
    <property type="match status" value="1"/>
</dbReference>
<dbReference type="PROSITE" id="PS50842">
    <property type="entry name" value="EXPANSIN_EG45"/>
    <property type="match status" value="1"/>
</dbReference>
<name>MPAH1_HOLLA</name>
<organism>
    <name type="scientific">Holcus lanatus</name>
    <name type="common">Yorkshire-fog</name>
    <name type="synonym">Nothoholcus lanatus</name>
    <dbReference type="NCBI Taxonomy" id="29679"/>
    <lineage>
        <taxon>Eukaryota</taxon>
        <taxon>Viridiplantae</taxon>
        <taxon>Streptophyta</taxon>
        <taxon>Embryophyta</taxon>
        <taxon>Tracheophyta</taxon>
        <taxon>Spermatophyta</taxon>
        <taxon>Magnoliopsida</taxon>
        <taxon>Liliopsida</taxon>
        <taxon>Poales</taxon>
        <taxon>Poaceae</taxon>
        <taxon>BOP clade</taxon>
        <taxon>Pooideae</taxon>
        <taxon>Poodae</taxon>
        <taxon>Poeae</taxon>
        <taxon>Poeae Chloroplast Group 2 (Poeae type)</taxon>
        <taxon>Holcinae</taxon>
        <taxon>Holcus</taxon>
    </lineage>
</organism>
<evidence type="ECO:0000255" key="1"/>
<evidence type="ECO:0000255" key="2">
    <source>
        <dbReference type="PROSITE-ProRule" id="PRU00078"/>
    </source>
</evidence>
<evidence type="ECO:0000255" key="3">
    <source>
        <dbReference type="PROSITE-ProRule" id="PRU00079"/>
    </source>
</evidence>
<evidence type="ECO:0000305" key="4"/>
<proteinExistence type="evidence at protein level"/>
<sequence length="265" mass="28590">MASSSRSVLLLVAALFAVFLGSAHGIAKVPPGPNITATYGDEWLDAKSTWYGKPTGAGPKDNGGACGYKDVDKPPFSGMTGCGNTPIFKDGRGCGSCFEIKCTKPESCSGEPVTVHITDDNEEPIAPYHFDLSGHAFGSMAKKGEEQKLRSAGELELKFRRVKCKYPDGTKPTFHVEKGSNPNYLALLVKYIDGDGDVVAVDIKEKGKDKWIELKESWGAVWRVDTPDKLTGPFTVRYTTEGGTKGEAEDVIPEGWKADTAYEAK</sequence>
<reference key="1">
    <citation type="submission" date="1993-11" db="EMBL/GenBank/DDBJ databases">
        <authorList>
            <person name="Schramm G.D."/>
            <person name="Bufe A."/>
            <person name="Becker W.M."/>
            <person name="Schlaak M."/>
        </authorList>
    </citation>
    <scope>NUCLEOTIDE SEQUENCE [MRNA]</scope>
    <source>
        <strain>cv. Aveneae</strain>
        <tissue>Pollen</tissue>
    </source>
</reference>
<reference key="2">
    <citation type="journal article" date="1997" name="J. Allergy Clin. Immunol.">
        <title>Mapping of IgE-binding epitopes on the recombinant major group I allergen of velvet grass pollen, rHol l 1.</title>
        <authorList>
            <person name="Schramm G.D."/>
            <person name="Bufe A."/>
            <person name="Petersen A."/>
            <person name="Haas H."/>
            <person name="Schlaak M."/>
            <person name="Becker W.M."/>
        </authorList>
    </citation>
    <scope>NUCLEOTIDE SEQUENCE [MRNA] OF 18-265</scope>
    <source>
        <strain>cv. Aveneae</strain>
        <tissue>Pollen</tissue>
    </source>
</reference>
<reference key="3">
    <citation type="journal article" date="1996" name="Int. Arch. Allergy Immunol.">
        <title>Identification and characterization of the major allergens of velvet grass (Holcus lanatus), Hol l 1 and Hol l 5.</title>
        <authorList>
            <person name="Schramm G.D."/>
            <person name="Petersen A."/>
            <person name="Bufe A."/>
            <person name="Schlaak M."/>
            <person name="Becker W.M."/>
        </authorList>
    </citation>
    <scope>CHARACTERIZATION</scope>
    <source>
        <strain>cv. Aveneae</strain>
        <tissue>Pollen</tissue>
    </source>
</reference>
<feature type="signal peptide" evidence="1">
    <location>
        <begin position="1"/>
        <end position="25"/>
    </location>
</feature>
<feature type="chain" id="PRO_0000008719" description="Major pollen allergen Hol l 1">
    <location>
        <begin position="26"/>
        <end position="265"/>
    </location>
</feature>
<feature type="domain" description="Expansin-like EG45" evidence="3">
    <location>
        <begin position="63"/>
        <end position="169"/>
    </location>
</feature>
<feature type="domain" description="Expansin-like CBD" evidence="2">
    <location>
        <begin position="183"/>
        <end position="264"/>
    </location>
</feature>
<feature type="glycosylation site" description="N-linked (GlcNAc...) asparagine" evidence="1">
    <location>
        <position position="34"/>
    </location>
</feature>
<feature type="sequence variant" description="In Hol l 1.0102.">
    <original>T</original>
    <variation>S</variation>
    <location>
        <position position="103"/>
    </location>
</feature>
<keyword id="KW-0020">Allergen</keyword>
<keyword id="KW-0325">Glycoprotein</keyword>
<keyword id="KW-0964">Secreted</keyword>
<keyword id="KW-0732">Signal</keyword>
<accession>P43216</accession>
<accession>Q39975</accession>